<accession>C4ZSW9</accession>
<feature type="chain" id="PRO_1000214948" description="Large ribosomal subunit protein uL13">
    <location>
        <begin position="1"/>
        <end position="142"/>
    </location>
</feature>
<name>RL13_ECOBW</name>
<sequence length="142" mass="16019">MKTFTAKPETVKRDWYVVDATGKTLGRLATELARRLRGKHKAEYTPHVDTGDYIIVLNADKVAVTGNKRTDKVYYHHTGHIGGIKQATFEEMIARRPERVIEIAVKGMLPKGPLGRAMFRKLKVYAGNEHNHAAQQPQVLDI</sequence>
<reference key="1">
    <citation type="journal article" date="2009" name="J. Bacteriol.">
        <title>Genomic sequencing reveals regulatory mutations and recombinational events in the widely used MC4100 lineage of Escherichia coli K-12.</title>
        <authorList>
            <person name="Ferenci T."/>
            <person name="Zhou Z."/>
            <person name="Betteridge T."/>
            <person name="Ren Y."/>
            <person name="Liu Y."/>
            <person name="Feng L."/>
            <person name="Reeves P.R."/>
            <person name="Wang L."/>
        </authorList>
    </citation>
    <scope>NUCLEOTIDE SEQUENCE [LARGE SCALE GENOMIC DNA]</scope>
    <source>
        <strain>K12 / MC4100 / BW2952</strain>
    </source>
</reference>
<organism>
    <name type="scientific">Escherichia coli (strain K12 / MC4100 / BW2952)</name>
    <dbReference type="NCBI Taxonomy" id="595496"/>
    <lineage>
        <taxon>Bacteria</taxon>
        <taxon>Pseudomonadati</taxon>
        <taxon>Pseudomonadota</taxon>
        <taxon>Gammaproteobacteria</taxon>
        <taxon>Enterobacterales</taxon>
        <taxon>Enterobacteriaceae</taxon>
        <taxon>Escherichia</taxon>
    </lineage>
</organism>
<gene>
    <name evidence="1" type="primary">rplM</name>
    <name type="ordered locus">BWG_2932</name>
</gene>
<comment type="function">
    <text evidence="1">This protein is one of the early assembly proteins of the 50S ribosomal subunit, although it is not seen to bind rRNA by itself. It is important during the early stages of 50S assembly.</text>
</comment>
<comment type="subunit">
    <text evidence="1">Part of the 50S ribosomal subunit.</text>
</comment>
<comment type="similarity">
    <text evidence="1">Belongs to the universal ribosomal protein uL13 family.</text>
</comment>
<evidence type="ECO:0000255" key="1">
    <source>
        <dbReference type="HAMAP-Rule" id="MF_01366"/>
    </source>
</evidence>
<evidence type="ECO:0000305" key="2"/>
<proteinExistence type="inferred from homology"/>
<keyword id="KW-0687">Ribonucleoprotein</keyword>
<keyword id="KW-0689">Ribosomal protein</keyword>
<dbReference type="EMBL" id="CP001396">
    <property type="protein sequence ID" value="ACR61849.1"/>
    <property type="molecule type" value="Genomic_DNA"/>
</dbReference>
<dbReference type="RefSeq" id="WP_000847559.1">
    <property type="nucleotide sequence ID" value="NC_012759.1"/>
</dbReference>
<dbReference type="SMR" id="C4ZSW9"/>
<dbReference type="GeneID" id="89518067"/>
<dbReference type="KEGG" id="ebw:BWG_2932"/>
<dbReference type="HOGENOM" id="CLU_082184_2_2_6"/>
<dbReference type="GO" id="GO:0022625">
    <property type="term" value="C:cytosolic large ribosomal subunit"/>
    <property type="evidence" value="ECO:0007669"/>
    <property type="project" value="TreeGrafter"/>
</dbReference>
<dbReference type="GO" id="GO:0003729">
    <property type="term" value="F:mRNA binding"/>
    <property type="evidence" value="ECO:0007669"/>
    <property type="project" value="TreeGrafter"/>
</dbReference>
<dbReference type="GO" id="GO:0003735">
    <property type="term" value="F:structural constituent of ribosome"/>
    <property type="evidence" value="ECO:0007669"/>
    <property type="project" value="InterPro"/>
</dbReference>
<dbReference type="GO" id="GO:0017148">
    <property type="term" value="P:negative regulation of translation"/>
    <property type="evidence" value="ECO:0007669"/>
    <property type="project" value="TreeGrafter"/>
</dbReference>
<dbReference type="GO" id="GO:0006412">
    <property type="term" value="P:translation"/>
    <property type="evidence" value="ECO:0007669"/>
    <property type="project" value="UniProtKB-UniRule"/>
</dbReference>
<dbReference type="CDD" id="cd00392">
    <property type="entry name" value="Ribosomal_L13"/>
    <property type="match status" value="1"/>
</dbReference>
<dbReference type="FunFam" id="3.90.1180.10:FF:000001">
    <property type="entry name" value="50S ribosomal protein L13"/>
    <property type="match status" value="1"/>
</dbReference>
<dbReference type="Gene3D" id="3.90.1180.10">
    <property type="entry name" value="Ribosomal protein L13"/>
    <property type="match status" value="1"/>
</dbReference>
<dbReference type="HAMAP" id="MF_01366">
    <property type="entry name" value="Ribosomal_uL13"/>
    <property type="match status" value="1"/>
</dbReference>
<dbReference type="InterPro" id="IPR005822">
    <property type="entry name" value="Ribosomal_uL13"/>
</dbReference>
<dbReference type="InterPro" id="IPR005823">
    <property type="entry name" value="Ribosomal_uL13_bac-type"/>
</dbReference>
<dbReference type="InterPro" id="IPR023563">
    <property type="entry name" value="Ribosomal_uL13_CS"/>
</dbReference>
<dbReference type="InterPro" id="IPR036899">
    <property type="entry name" value="Ribosomal_uL13_sf"/>
</dbReference>
<dbReference type="NCBIfam" id="TIGR01066">
    <property type="entry name" value="rplM_bact"/>
    <property type="match status" value="1"/>
</dbReference>
<dbReference type="PANTHER" id="PTHR11545:SF2">
    <property type="entry name" value="LARGE RIBOSOMAL SUBUNIT PROTEIN UL13M"/>
    <property type="match status" value="1"/>
</dbReference>
<dbReference type="PANTHER" id="PTHR11545">
    <property type="entry name" value="RIBOSOMAL PROTEIN L13"/>
    <property type="match status" value="1"/>
</dbReference>
<dbReference type="Pfam" id="PF00572">
    <property type="entry name" value="Ribosomal_L13"/>
    <property type="match status" value="1"/>
</dbReference>
<dbReference type="PIRSF" id="PIRSF002181">
    <property type="entry name" value="Ribosomal_L13"/>
    <property type="match status" value="1"/>
</dbReference>
<dbReference type="SUPFAM" id="SSF52161">
    <property type="entry name" value="Ribosomal protein L13"/>
    <property type="match status" value="1"/>
</dbReference>
<dbReference type="PROSITE" id="PS00783">
    <property type="entry name" value="RIBOSOMAL_L13"/>
    <property type="match status" value="1"/>
</dbReference>
<protein>
    <recommendedName>
        <fullName evidence="1">Large ribosomal subunit protein uL13</fullName>
    </recommendedName>
    <alternativeName>
        <fullName evidence="2">50S ribosomal protein L13</fullName>
    </alternativeName>
</protein>